<organism>
    <name type="scientific">Arabidopsis thaliana</name>
    <name type="common">Mouse-ear cress</name>
    <dbReference type="NCBI Taxonomy" id="3702"/>
    <lineage>
        <taxon>Eukaryota</taxon>
        <taxon>Viridiplantae</taxon>
        <taxon>Streptophyta</taxon>
        <taxon>Embryophyta</taxon>
        <taxon>Tracheophyta</taxon>
        <taxon>Spermatophyta</taxon>
        <taxon>Magnoliopsida</taxon>
        <taxon>eudicotyledons</taxon>
        <taxon>Gunneridae</taxon>
        <taxon>Pentapetalae</taxon>
        <taxon>rosids</taxon>
        <taxon>malvids</taxon>
        <taxon>Brassicales</taxon>
        <taxon>Brassicaceae</taxon>
        <taxon>Camelineae</taxon>
        <taxon>Arabidopsis</taxon>
    </lineage>
</organism>
<feature type="chain" id="PRO_0000409569" description="BTB/POZ domain-containing protein At1g03010">
    <location>
        <begin position="1"/>
        <end position="634"/>
    </location>
</feature>
<feature type="domain" description="BTB" evidence="4">
    <location>
        <begin position="38"/>
        <end position="103"/>
    </location>
</feature>
<feature type="domain" description="NPH3" evidence="5">
    <location>
        <begin position="205"/>
        <end position="503"/>
    </location>
</feature>
<feature type="coiled-coil region" evidence="3">
    <location>
        <begin position="542"/>
        <end position="580"/>
    </location>
</feature>
<feature type="modified residue" description="Phosphotyrosine" evidence="2">
    <location>
        <position position="444"/>
    </location>
</feature>
<dbReference type="EMBL" id="AC006550">
    <property type="protein sequence ID" value="AAD25808.1"/>
    <property type="molecule type" value="Genomic_DNA"/>
</dbReference>
<dbReference type="EMBL" id="CP002684">
    <property type="protein sequence ID" value="AEE27514.1"/>
    <property type="molecule type" value="Genomic_DNA"/>
</dbReference>
<dbReference type="PIR" id="G86160">
    <property type="entry name" value="G86160"/>
</dbReference>
<dbReference type="RefSeq" id="NP_171800.1">
    <property type="nucleotide sequence ID" value="NM_100182.3"/>
</dbReference>
<dbReference type="FunCoup" id="Q9SA69">
    <property type="interactions" value="247"/>
</dbReference>
<dbReference type="GlyGen" id="Q9SA69">
    <property type="glycosylation" value="1 site"/>
</dbReference>
<dbReference type="iPTMnet" id="Q9SA69"/>
<dbReference type="PaxDb" id="3702-AT1G03010.1"/>
<dbReference type="ProteomicsDB" id="242531"/>
<dbReference type="EnsemblPlants" id="AT1G03010.1">
    <property type="protein sequence ID" value="AT1G03010.1"/>
    <property type="gene ID" value="AT1G03010"/>
</dbReference>
<dbReference type="GeneID" id="839556"/>
<dbReference type="Gramene" id="AT1G03010.1">
    <property type="protein sequence ID" value="AT1G03010.1"/>
    <property type="gene ID" value="AT1G03010"/>
</dbReference>
<dbReference type="KEGG" id="ath:AT1G03010"/>
<dbReference type="Araport" id="AT1G03010"/>
<dbReference type="TAIR" id="AT1G03010"/>
<dbReference type="eggNOG" id="ENOG502QSDZ">
    <property type="taxonomic scope" value="Eukaryota"/>
</dbReference>
<dbReference type="HOGENOM" id="CLU_005994_6_0_1"/>
<dbReference type="InParanoid" id="Q9SA69"/>
<dbReference type="OrthoDB" id="624345at2759"/>
<dbReference type="PhylomeDB" id="Q9SA69"/>
<dbReference type="UniPathway" id="UPA00143"/>
<dbReference type="PRO" id="PR:Q9SA69"/>
<dbReference type="Proteomes" id="UP000006548">
    <property type="component" value="Chromosome 1"/>
</dbReference>
<dbReference type="ExpressionAtlas" id="Q9SA69">
    <property type="expression patterns" value="baseline and differential"/>
</dbReference>
<dbReference type="GO" id="GO:0009860">
    <property type="term" value="P:pollen tube growth"/>
    <property type="evidence" value="ECO:0000270"/>
    <property type="project" value="TAIR"/>
</dbReference>
<dbReference type="GO" id="GO:0016567">
    <property type="term" value="P:protein ubiquitination"/>
    <property type="evidence" value="ECO:0007669"/>
    <property type="project" value="UniProtKB-UniPathway"/>
</dbReference>
<dbReference type="FunFam" id="3.30.710.10:FF:000168">
    <property type="entry name" value="BTB/POZ domain-containing protein At1g03010"/>
    <property type="match status" value="1"/>
</dbReference>
<dbReference type="Gene3D" id="3.30.710.10">
    <property type="entry name" value="Potassium Channel Kv1.1, Chain A"/>
    <property type="match status" value="1"/>
</dbReference>
<dbReference type="InterPro" id="IPR000210">
    <property type="entry name" value="BTB/POZ_dom"/>
</dbReference>
<dbReference type="InterPro" id="IPR043454">
    <property type="entry name" value="NPH3/RPT2-like"/>
</dbReference>
<dbReference type="InterPro" id="IPR027356">
    <property type="entry name" value="NPH3_dom"/>
</dbReference>
<dbReference type="InterPro" id="IPR011333">
    <property type="entry name" value="SKP1/BTB/POZ_sf"/>
</dbReference>
<dbReference type="PANTHER" id="PTHR32370">
    <property type="entry name" value="OS12G0117600 PROTEIN"/>
    <property type="match status" value="1"/>
</dbReference>
<dbReference type="Pfam" id="PF03000">
    <property type="entry name" value="NPH3"/>
    <property type="match status" value="1"/>
</dbReference>
<dbReference type="SUPFAM" id="SSF54695">
    <property type="entry name" value="POZ domain"/>
    <property type="match status" value="1"/>
</dbReference>
<dbReference type="PROSITE" id="PS50097">
    <property type="entry name" value="BTB"/>
    <property type="match status" value="1"/>
</dbReference>
<dbReference type="PROSITE" id="PS51649">
    <property type="entry name" value="NPH3"/>
    <property type="match status" value="1"/>
</dbReference>
<reference key="1">
    <citation type="journal article" date="2000" name="Nature">
        <title>Sequence and analysis of chromosome 1 of the plant Arabidopsis thaliana.</title>
        <authorList>
            <person name="Theologis A."/>
            <person name="Ecker J.R."/>
            <person name="Palm C.J."/>
            <person name="Federspiel N.A."/>
            <person name="Kaul S."/>
            <person name="White O."/>
            <person name="Alonso J."/>
            <person name="Altafi H."/>
            <person name="Araujo R."/>
            <person name="Bowman C.L."/>
            <person name="Brooks S.Y."/>
            <person name="Buehler E."/>
            <person name="Chan A."/>
            <person name="Chao Q."/>
            <person name="Chen H."/>
            <person name="Cheuk R.F."/>
            <person name="Chin C.W."/>
            <person name="Chung M.K."/>
            <person name="Conn L."/>
            <person name="Conway A.B."/>
            <person name="Conway A.R."/>
            <person name="Creasy T.H."/>
            <person name="Dewar K."/>
            <person name="Dunn P."/>
            <person name="Etgu P."/>
            <person name="Feldblyum T.V."/>
            <person name="Feng J.-D."/>
            <person name="Fong B."/>
            <person name="Fujii C.Y."/>
            <person name="Gill J.E."/>
            <person name="Goldsmith A.D."/>
            <person name="Haas B."/>
            <person name="Hansen N.F."/>
            <person name="Hughes B."/>
            <person name="Huizar L."/>
            <person name="Hunter J.L."/>
            <person name="Jenkins J."/>
            <person name="Johnson-Hopson C."/>
            <person name="Khan S."/>
            <person name="Khaykin E."/>
            <person name="Kim C.J."/>
            <person name="Koo H.L."/>
            <person name="Kremenetskaia I."/>
            <person name="Kurtz D.B."/>
            <person name="Kwan A."/>
            <person name="Lam B."/>
            <person name="Langin-Hooper S."/>
            <person name="Lee A."/>
            <person name="Lee J.M."/>
            <person name="Lenz C.A."/>
            <person name="Li J.H."/>
            <person name="Li Y.-P."/>
            <person name="Lin X."/>
            <person name="Liu S.X."/>
            <person name="Liu Z.A."/>
            <person name="Luros J.S."/>
            <person name="Maiti R."/>
            <person name="Marziali A."/>
            <person name="Militscher J."/>
            <person name="Miranda M."/>
            <person name="Nguyen M."/>
            <person name="Nierman W.C."/>
            <person name="Osborne B.I."/>
            <person name="Pai G."/>
            <person name="Peterson J."/>
            <person name="Pham P.K."/>
            <person name="Rizzo M."/>
            <person name="Rooney T."/>
            <person name="Rowley D."/>
            <person name="Sakano H."/>
            <person name="Salzberg S.L."/>
            <person name="Schwartz J.R."/>
            <person name="Shinn P."/>
            <person name="Southwick A.M."/>
            <person name="Sun H."/>
            <person name="Tallon L.J."/>
            <person name="Tambunga G."/>
            <person name="Toriumi M.J."/>
            <person name="Town C.D."/>
            <person name="Utterback T."/>
            <person name="Van Aken S."/>
            <person name="Vaysberg M."/>
            <person name="Vysotskaia V.S."/>
            <person name="Walker M."/>
            <person name="Wu D."/>
            <person name="Yu G."/>
            <person name="Fraser C.M."/>
            <person name="Venter J.C."/>
            <person name="Davis R.W."/>
        </authorList>
    </citation>
    <scope>NUCLEOTIDE SEQUENCE [LARGE SCALE GENOMIC DNA]</scope>
    <source>
        <strain>cv. Columbia</strain>
    </source>
</reference>
<reference key="2">
    <citation type="journal article" date="2017" name="Plant J.">
        <title>Araport11: a complete reannotation of the Arabidopsis thaliana reference genome.</title>
        <authorList>
            <person name="Cheng C.Y."/>
            <person name="Krishnakumar V."/>
            <person name="Chan A.P."/>
            <person name="Thibaud-Nissen F."/>
            <person name="Schobel S."/>
            <person name="Town C.D."/>
        </authorList>
    </citation>
    <scope>GENOME REANNOTATION</scope>
    <source>
        <strain>cv. Columbia</strain>
    </source>
</reference>
<reference key="3">
    <citation type="journal article" date="2005" name="J. Biol. Chem.">
        <title>Cullins 3a and 3b assemble with members of the broad complex/tramtrack/bric-a-brac (BTB) protein family to form essential ubiquitin-protein ligases (E3s) in Arabidopsis.</title>
        <authorList>
            <person name="Gingerich D.J."/>
            <person name="Gagne J.M."/>
            <person name="Salter D.W."/>
            <person name="Hellmann H."/>
            <person name="Estelle M."/>
            <person name="Ma L."/>
            <person name="Vierstra R.D."/>
        </authorList>
    </citation>
    <scope>DOMAIN BTB</scope>
</reference>
<protein>
    <recommendedName>
        <fullName>BTB/POZ domain-containing protein At1g03010</fullName>
    </recommendedName>
</protein>
<keyword id="KW-0175">Coiled coil</keyword>
<keyword id="KW-0597">Phosphoprotein</keyword>
<keyword id="KW-1185">Reference proteome</keyword>
<keyword id="KW-0833">Ubl conjugation pathway</keyword>
<name>Y1301_ARATH</name>
<comment type="function">
    <text evidence="1">May act as a substrate-specific adapter of an E3 ubiquitin-protein ligase complex (CUL3-RBX1-BTB) which mediates the ubiquitination and subsequent proteasomal degradation of target proteins.</text>
</comment>
<comment type="pathway">
    <text>Protein modification; protein ubiquitination.</text>
</comment>
<comment type="domain">
    <text evidence="6">The BTB/POZ domain mediates the interaction with some component of ubiquitin ligase complexes.</text>
</comment>
<comment type="similarity">
    <text evidence="5">Belongs to the NPH3 family.</text>
</comment>
<sequence length="634" mass="71160">MGLVTVGELKPAFTGKRGFRLNSTIRHASEWPISDVSSDLTVQVGSSSFCLHKFPLVSRSGKIRKLLADPKISNVCLSNAPGGSEAFELAAKFCYGINIEINLLNIAKLRCASHYLEMTEDFSEENLASKTEHFLKETIFPSILNSIIVLHHCETLIPVSEDLNLVNRLIIAVANNACKEQLTSGLLKLDYSFSGTNIEPQTPLDWWGKSLAVLNLDFFQRVISAVKSKGLIQDVISKILISYTNKSLQGLIVRDPKLEKERVLDSEGKKKQRLIVETIVRLLPTQGRRSSVPMAFLSSLLKMVIATSSSASTGSCRSDLERRIGLQLDQAILEDVLIPINLNGTNNTMYDIDSILRIFSIFLNLDEDDEEEEHHHLQFRDETEMIYDFDSPGSPKQSSILKVSKLMDNYLAEIAMDPNLTTSKFIALAELLPDHARIISDGLYRAVDIYLKVHPNIKDSERYRLCKTIDSQKLSQEACSHAAQNERLPVQMAVQVLYFEQIRLRNAMSSSIGPTQFLFNSNCHQFPQRSGSGAGSGAISPRDNYASVRRENRELKLEVARMRMRLTDLEKDHISIKQELVKSNPGTKLFKSFAKKISKLNSLFSFSSLKPSLSGKASSESRFLFQRKRRHSVS</sequence>
<accession>Q9SA69</accession>
<proteinExistence type="evidence at transcript level"/>
<evidence type="ECO:0000250" key="1"/>
<evidence type="ECO:0000250" key="2">
    <source>
        <dbReference type="UniProtKB" id="Q9FMF5"/>
    </source>
</evidence>
<evidence type="ECO:0000255" key="3"/>
<evidence type="ECO:0000255" key="4">
    <source>
        <dbReference type="PROSITE-ProRule" id="PRU00037"/>
    </source>
</evidence>
<evidence type="ECO:0000255" key="5">
    <source>
        <dbReference type="PROSITE-ProRule" id="PRU00982"/>
    </source>
</evidence>
<evidence type="ECO:0000269" key="6">
    <source>
    </source>
</evidence>
<gene>
    <name type="ordered locus">At1g03010</name>
    <name type="ORF">F10O3.17</name>
</gene>